<accession>B0RUE7</accession>
<name>MSRA_XANCB</name>
<reference key="1">
    <citation type="journal article" date="2008" name="J. Biotechnol.">
        <title>The genome of Xanthomonas campestris pv. campestris B100 and its use for the reconstruction of metabolic pathways involved in xanthan biosynthesis.</title>
        <authorList>
            <person name="Vorhoelter F.-J."/>
            <person name="Schneiker S."/>
            <person name="Goesmann A."/>
            <person name="Krause L."/>
            <person name="Bekel T."/>
            <person name="Kaiser O."/>
            <person name="Linke B."/>
            <person name="Patschkowski T."/>
            <person name="Rueckert C."/>
            <person name="Schmid J."/>
            <person name="Sidhu V.K."/>
            <person name="Sieber V."/>
            <person name="Tauch A."/>
            <person name="Watt S.A."/>
            <person name="Weisshaar B."/>
            <person name="Becker A."/>
            <person name="Niehaus K."/>
            <person name="Puehler A."/>
        </authorList>
    </citation>
    <scope>NUCLEOTIDE SEQUENCE [LARGE SCALE GENOMIC DNA]</scope>
    <source>
        <strain>B100</strain>
    </source>
</reference>
<gene>
    <name evidence="1" type="primary">msrA</name>
    <name type="ordered locus">xcc-b100_3524</name>
</gene>
<feature type="chain" id="PRO_1000145443" description="Peptide methionine sulfoxide reductase MsrA">
    <location>
        <begin position="1"/>
        <end position="216"/>
    </location>
</feature>
<feature type="active site" evidence="1">
    <location>
        <position position="54"/>
    </location>
</feature>
<organism>
    <name type="scientific">Xanthomonas campestris pv. campestris (strain B100)</name>
    <dbReference type="NCBI Taxonomy" id="509169"/>
    <lineage>
        <taxon>Bacteria</taxon>
        <taxon>Pseudomonadati</taxon>
        <taxon>Pseudomonadota</taxon>
        <taxon>Gammaproteobacteria</taxon>
        <taxon>Lysobacterales</taxon>
        <taxon>Lysobacteraceae</taxon>
        <taxon>Xanthomonas</taxon>
    </lineage>
</organism>
<protein>
    <recommendedName>
        <fullName evidence="1">Peptide methionine sulfoxide reductase MsrA</fullName>
        <shortName evidence="1">Protein-methionine-S-oxide reductase</shortName>
        <ecNumber evidence="1">1.8.4.11</ecNumber>
    </recommendedName>
    <alternativeName>
        <fullName evidence="1">Peptide-methionine (S)-S-oxide reductase</fullName>
        <shortName evidence="1">Peptide Met(O) reductase</shortName>
    </alternativeName>
</protein>
<evidence type="ECO:0000255" key="1">
    <source>
        <dbReference type="HAMAP-Rule" id="MF_01401"/>
    </source>
</evidence>
<comment type="function">
    <text evidence="1">Has an important function as a repair enzyme for proteins that have been inactivated by oxidation. Catalyzes the reversible oxidation-reduction of methionine sulfoxide in proteins to methionine.</text>
</comment>
<comment type="catalytic activity">
    <reaction evidence="1">
        <text>L-methionyl-[protein] + [thioredoxin]-disulfide + H2O = L-methionyl-(S)-S-oxide-[protein] + [thioredoxin]-dithiol</text>
        <dbReference type="Rhea" id="RHEA:14217"/>
        <dbReference type="Rhea" id="RHEA-COMP:10698"/>
        <dbReference type="Rhea" id="RHEA-COMP:10700"/>
        <dbReference type="Rhea" id="RHEA-COMP:12313"/>
        <dbReference type="Rhea" id="RHEA-COMP:12315"/>
        <dbReference type="ChEBI" id="CHEBI:15377"/>
        <dbReference type="ChEBI" id="CHEBI:16044"/>
        <dbReference type="ChEBI" id="CHEBI:29950"/>
        <dbReference type="ChEBI" id="CHEBI:44120"/>
        <dbReference type="ChEBI" id="CHEBI:50058"/>
        <dbReference type="EC" id="1.8.4.11"/>
    </reaction>
</comment>
<comment type="catalytic activity">
    <reaction evidence="1">
        <text>[thioredoxin]-disulfide + L-methionine + H2O = L-methionine (S)-S-oxide + [thioredoxin]-dithiol</text>
        <dbReference type="Rhea" id="RHEA:19993"/>
        <dbReference type="Rhea" id="RHEA-COMP:10698"/>
        <dbReference type="Rhea" id="RHEA-COMP:10700"/>
        <dbReference type="ChEBI" id="CHEBI:15377"/>
        <dbReference type="ChEBI" id="CHEBI:29950"/>
        <dbReference type="ChEBI" id="CHEBI:50058"/>
        <dbReference type="ChEBI" id="CHEBI:57844"/>
        <dbReference type="ChEBI" id="CHEBI:58772"/>
        <dbReference type="EC" id="1.8.4.11"/>
    </reaction>
</comment>
<comment type="similarity">
    <text evidence="1">Belongs to the MsrA Met sulfoxide reductase family.</text>
</comment>
<proteinExistence type="inferred from homology"/>
<keyword id="KW-0560">Oxidoreductase</keyword>
<dbReference type="EC" id="1.8.4.11" evidence="1"/>
<dbReference type="EMBL" id="AM920689">
    <property type="protein sequence ID" value="CAP52889.1"/>
    <property type="molecule type" value="Genomic_DNA"/>
</dbReference>
<dbReference type="SMR" id="B0RUE7"/>
<dbReference type="KEGG" id="xca:xcc-b100_3524"/>
<dbReference type="HOGENOM" id="CLU_031040_10_3_6"/>
<dbReference type="Proteomes" id="UP000001188">
    <property type="component" value="Chromosome"/>
</dbReference>
<dbReference type="GO" id="GO:0005737">
    <property type="term" value="C:cytoplasm"/>
    <property type="evidence" value="ECO:0007669"/>
    <property type="project" value="TreeGrafter"/>
</dbReference>
<dbReference type="GO" id="GO:0036456">
    <property type="term" value="F:L-methionine-(S)-S-oxide reductase activity"/>
    <property type="evidence" value="ECO:0007669"/>
    <property type="project" value="TreeGrafter"/>
</dbReference>
<dbReference type="GO" id="GO:0008113">
    <property type="term" value="F:peptide-methionine (S)-S-oxide reductase activity"/>
    <property type="evidence" value="ECO:0007669"/>
    <property type="project" value="UniProtKB-UniRule"/>
</dbReference>
<dbReference type="GO" id="GO:0034599">
    <property type="term" value="P:cellular response to oxidative stress"/>
    <property type="evidence" value="ECO:0007669"/>
    <property type="project" value="TreeGrafter"/>
</dbReference>
<dbReference type="GO" id="GO:0036211">
    <property type="term" value="P:protein modification process"/>
    <property type="evidence" value="ECO:0007669"/>
    <property type="project" value="UniProtKB-UniRule"/>
</dbReference>
<dbReference type="FunFam" id="3.30.1060.10:FF:000001">
    <property type="entry name" value="Peptide methionine sulfoxide reductase MsrA"/>
    <property type="match status" value="1"/>
</dbReference>
<dbReference type="Gene3D" id="3.30.1060.10">
    <property type="entry name" value="Peptide methionine sulphoxide reductase MsrA"/>
    <property type="match status" value="1"/>
</dbReference>
<dbReference type="HAMAP" id="MF_01401">
    <property type="entry name" value="MsrA"/>
    <property type="match status" value="1"/>
</dbReference>
<dbReference type="InterPro" id="IPR002569">
    <property type="entry name" value="Met_Sox_Rdtase_MsrA_dom"/>
</dbReference>
<dbReference type="InterPro" id="IPR036509">
    <property type="entry name" value="Met_Sox_Rdtase_MsrA_sf"/>
</dbReference>
<dbReference type="InterPro" id="IPR050162">
    <property type="entry name" value="MsrA_MetSO_reductase"/>
</dbReference>
<dbReference type="NCBIfam" id="TIGR00401">
    <property type="entry name" value="msrA"/>
    <property type="match status" value="1"/>
</dbReference>
<dbReference type="PANTHER" id="PTHR42799">
    <property type="entry name" value="MITOCHONDRIAL PEPTIDE METHIONINE SULFOXIDE REDUCTASE"/>
    <property type="match status" value="1"/>
</dbReference>
<dbReference type="PANTHER" id="PTHR42799:SF2">
    <property type="entry name" value="MITOCHONDRIAL PEPTIDE METHIONINE SULFOXIDE REDUCTASE"/>
    <property type="match status" value="1"/>
</dbReference>
<dbReference type="Pfam" id="PF01625">
    <property type="entry name" value="PMSR"/>
    <property type="match status" value="1"/>
</dbReference>
<dbReference type="SUPFAM" id="SSF55068">
    <property type="entry name" value="Peptide methionine sulfoxide reductase"/>
    <property type="match status" value="1"/>
</dbReference>
<sequence>MLGIGAFKQRMPRSGEALPGRTQALPLHNTHLINGHPLRGEFTGLAQVQFGLGCFWGAERKFWNVPGVYTTAVGYAGGKTPNATYSEVCSGQTGHTEAVLVVYDAQAVSFEQLLRTFWESHDPTQGMQQGNDVGTQYRSAIYCSTQAQYDAAIASRDAYQQQLTAAGYGDITTEILYPAPTFYYAEDDHQQYLAKHPNGYCGLGGTGVSCPIGLDA</sequence>